<reference key="1">
    <citation type="journal article" date="1999" name="J. Gen. Virol.">
        <title>Nucleotide sequences and taxonomy of satsuma dwarf virus.</title>
        <authorList>
            <person name="Iwanami T."/>
            <person name="Kondo Y."/>
            <person name="Karasev A.V."/>
        </authorList>
    </citation>
    <scope>NUCLEOTIDE SEQUENCE [GENOMIC RNA]</scope>
</reference>
<proteinExistence type="inferred from homology"/>
<dbReference type="EMBL" id="AB009959">
    <property type="protein sequence ID" value="BAA76747.1"/>
    <property type="molecule type" value="Genomic_RNA"/>
</dbReference>
<dbReference type="RefSeq" id="NP_620567.1">
    <property type="nucleotide sequence ID" value="NC_003786.2"/>
</dbReference>
<dbReference type="GeneID" id="993328"/>
<dbReference type="KEGG" id="vg:993328"/>
<dbReference type="Proteomes" id="UP000000675">
    <property type="component" value="Genome"/>
</dbReference>
<dbReference type="GO" id="GO:0044219">
    <property type="term" value="C:host cell plasmodesma"/>
    <property type="evidence" value="ECO:0007669"/>
    <property type="project" value="UniProtKB-SubCell"/>
</dbReference>
<dbReference type="GO" id="GO:0019028">
    <property type="term" value="C:viral capsid"/>
    <property type="evidence" value="ECO:0007669"/>
    <property type="project" value="UniProtKB-KW"/>
</dbReference>
<dbReference type="GO" id="GO:0046740">
    <property type="term" value="P:transport of virus in host, cell to cell"/>
    <property type="evidence" value="ECO:0007669"/>
    <property type="project" value="UniProtKB-KW"/>
</dbReference>
<dbReference type="Gene3D" id="2.60.120.20">
    <property type="match status" value="1"/>
</dbReference>
<dbReference type="InterPro" id="IPR005306">
    <property type="entry name" value="Nepo_coat_N"/>
</dbReference>
<dbReference type="InterPro" id="IPR029053">
    <property type="entry name" value="Viral_coat"/>
</dbReference>
<dbReference type="Pfam" id="PF03689">
    <property type="entry name" value="Nepo_coat_N"/>
    <property type="match status" value="1"/>
</dbReference>
<dbReference type="SUPFAM" id="SSF88633">
    <property type="entry name" value="Positive stranded ssRNA viruses"/>
    <property type="match status" value="1"/>
</dbReference>
<sequence length="1574" mass="174410">MEIYGFSPLSFQDTESWKNSAFAACRGCKTYPIEEVGTDGSVRIRELPVGLVLKGVMAQYRSILWTQFVADPATTTVDRKSFDFWLFCRRAEAAQERAFRARQSKRAAKAAALDAEGLIDRSYKGRTYKVSVRGLSWKSVRAAQKAARKAAKNFGFTISENPFSALPSEGRSAFSAGETPAPPACALPNICWAARRASAKSASPADVESLPFLGLLPESPRLRNEGLLSLLRAKLADFKAARAPLVPIAKRVVKTPSEDSIWESVEKNAPIVGCVINGMVGIPKNPIIQRLLPERKYIARKCVRAFVPQVMCSSRHKHDFAQLRNPDKWIVFPSVIRISTVDAYATARRLGLINDCSSALERVKAFSSHHLDLEKEVSRLEREACAAPRKTIVARVFKFFFEEYALAYDEVVERLRAAKEDRRREHLAFLRNIKRQAHELELKERQSFLVAIEEARIKSLELKAKIEEGPPPQILYTPEWHVVQRAKAYADVTMSPSERDIAHLAYENKYVNARAYPNTDVAAKFRARCDAHFERIFGYAVHRGTRTETLTQVAESPPPIITAPVGQRVGGNPPTETPGAAAVRAAMRRAVERNRPGPGESSAMPAREPLLSHRGQYYARSLSDRYNNICSRNNAYDLMRETDVPIMEFTFGQQQDIAIPLSSRFGNHQSLHVGELEIAVQSSVLTGVDTAMAIMVSDASHDRLEEGFLSLTILRLGAGWMRHTIPIGITVFPTDPLVDRFLRLSVLTGGSPMADGRQVARLHYGLLGQAYTGAGEQRLTQYATRRINVRQTHVTQFLEGNHIHIARSEDRQQPLPHMSLEFRPLSGSTRYVARPGGYQAIESGRQSVDITQNFIRMPTHLTRSATDREETPAPNNPNEQNVGRSEINAEIPTNSAEEEERRRRTPHGSAIHRGYTEFSERNENLIEHLYVPSMHGLSLKEDIHLFTKNLEIPSTADFCKELARYSGLTEAMSYRGASYYSRLLSGVAILRPHFKFTFRLVTPILESIPLFVVWDDLGQLNTKVSLLSSAFQVIDSDHTRAAVYEVRPSGPTDLLTPSKANYGVGGDLVIFSGGYGSLSLSSPLRLKIEACLLKDTSLGSGEIALPQGPSSMLSFHYLNEVDLGDVNMHIFLGSCKYKSSSTVGGRKYISVCPAAGLVHKGGKAAYLGLGASLFSLYNFWKGSYVLKVDVLSKGSCAGAISIYIPPPGSSADHYSQSQLDTLPRYELPWRGSGSARFEVENFSWIGWHLTKPQRYITNEDWFSLNAGLLVVLNQPPTTRTGGSSDIRVIFRIVKFKNLTLKERSTTCDIFAGIKDSEYTDPLVDVLDENITAPSASSLTTVQDPDLGLETTSSAQTSGLTTTRSFGAYYAYLLGGESAGNRWHSYVLPITMGHHREMIGASKTGYLNTQLDETIRIRYSLRNPLHILCSAGAYYAVDLLFTLVVDGDHGAERAYTQLGLIQTPLMEYFDGYSASRNLSSEGGYSNQLGVGKSYVQLIVPRRNYRARSITTNTGALFFETIGSLTVKFAVSAKIKGVHLYVEPVGPIDVDGYGRGADISLTNENFVLMPSLRTAA</sequence>
<organismHost>
    <name type="scientific">Citrus unshiu</name>
    <name type="common">Satsuma mandarin</name>
    <name type="synonym">Citrus nobilis var. unshiu</name>
    <dbReference type="NCBI Taxonomy" id="55188"/>
</organismHost>
<name>POL2_SDVS5</name>
<accession>Q9WAL9</accession>
<evidence type="ECO:0000250" key="1"/>
<evidence type="ECO:0000255" key="2"/>
<evidence type="ECO:0000256" key="3">
    <source>
        <dbReference type="SAM" id="MobiDB-lite"/>
    </source>
</evidence>
<evidence type="ECO:0000305" key="4"/>
<protein>
    <recommendedName>
        <fullName>RNA2 polyprotein</fullName>
    </recommendedName>
    <alternativeName>
        <fullName>P2</fullName>
    </alternativeName>
    <component>
        <recommendedName>
            <fullName>Movement protein</fullName>
            <shortName>MP</shortName>
        </recommendedName>
    </component>
    <component>
        <recommendedName>
            <fullName>Large capsid protein</fullName>
            <shortName>LCP</shortName>
        </recommendedName>
    </component>
    <component>
        <recommendedName>
            <fullName>Small capsid protein</fullName>
            <shortName>SCP</shortName>
        </recommendedName>
    </component>
</protein>
<keyword id="KW-0167">Capsid protein</keyword>
<keyword id="KW-0175">Coiled coil</keyword>
<keyword id="KW-1031">Host cell junction</keyword>
<keyword id="KW-1185">Reference proteome</keyword>
<keyword id="KW-0813">Transport</keyword>
<keyword id="KW-0916">Viral movement protein</keyword>
<keyword id="KW-0946">Virion</keyword>
<feature type="chain" id="PRO_0000402776" description="RNA2 polyprotein">
    <location>
        <begin position="1"/>
        <end position="1574"/>
    </location>
</feature>
<feature type="chain" id="PRO_0000402777" description="Movement protein">
    <location>
        <begin position="1"/>
        <end position="913"/>
    </location>
</feature>
<feature type="chain" id="PRO_0000402778" description="Large capsid protein">
    <location>
        <begin position="914"/>
        <end position="1357"/>
    </location>
</feature>
<feature type="chain" id="PRO_0000402779" description="Small capsid protein">
    <location>
        <begin position="1358"/>
        <end position="1574"/>
    </location>
</feature>
<feature type="region of interest" description="Disordered" evidence="3">
    <location>
        <begin position="557"/>
        <end position="579"/>
    </location>
</feature>
<feature type="region of interest" description="Disordered" evidence="3">
    <location>
        <begin position="863"/>
        <end position="916"/>
    </location>
</feature>
<feature type="coiled-coil region" evidence="2">
    <location>
        <begin position="361"/>
        <end position="422"/>
    </location>
</feature>
<feature type="site" description="Cleavage" evidence="2">
    <location>
        <begin position="913"/>
        <end position="914"/>
    </location>
</feature>
<feature type="site" description="Cleavage" evidence="2">
    <location>
        <begin position="1357"/>
        <end position="1358"/>
    </location>
</feature>
<comment type="function">
    <molecule>Movement protein</molecule>
    <text evidence="1">Transports viral genome to neighboring plant cells directly through plasmosdesmata, without any budding. The movement protein allows efficient cell to cell propagation, by bypassing the host cell wall barrier. Acts by forming a tubular structure at the host plasmodesmata, enlarging it enough to allow free passage of virion capsids (By similarity).</text>
</comment>
<comment type="function">
    <text evidence="4">Capsid proteins form a capsid enclosing the viral positive strand RNA genome. Together they form an icosahedral capsid pseudo T=3 with a diameter of approximately 30 nm (Potential).</text>
</comment>
<comment type="subcellular location">
    <molecule>Movement protein</molecule>
    <subcellularLocation>
        <location evidence="1">Host cell junction</location>
        <location evidence="1">Host plasmodesma</location>
    </subcellularLocation>
    <text evidence="1">Assembles in tubules that are embedded within modified plasmodesmata.</text>
</comment>
<comment type="subcellular location">
    <molecule>Large capsid protein</molecule>
    <subcellularLocation>
        <location evidence="4">Virion</location>
    </subcellularLocation>
</comment>
<comment type="subcellular location">
    <molecule>Small capsid protein</molecule>
    <subcellularLocation>
        <location evidence="4">Virion</location>
    </subcellularLocation>
</comment>
<comment type="PTM">
    <text evidence="1">Specific enzymatic cleavages by RNA1 encoded picornain 3C-like protease in vivo yield mature proteins.</text>
</comment>
<organism>
    <name type="scientific">Satsuma dwarf virus (isolate Satsuma mandarin/Japan/S-58/1977)</name>
    <name type="common">SDV</name>
    <dbReference type="NCBI Taxonomy" id="650481"/>
    <lineage>
        <taxon>Viruses</taxon>
        <taxon>Riboviria</taxon>
        <taxon>Orthornavirae</taxon>
        <taxon>Pisuviricota</taxon>
        <taxon>Pisoniviricetes</taxon>
        <taxon>Picornavirales</taxon>
        <taxon>Secoviridae</taxon>
        <taxon>Sadwavirus</taxon>
        <taxon>Satsumavirus</taxon>
        <taxon>Sadwavirus citri</taxon>
    </lineage>
</organism>